<comment type="similarity">
    <text evidence="4">Belongs to the EFCAB4 family.</text>
</comment>
<comment type="sequence caution" evidence="4">
    <conflict type="erroneous initiation">
        <sequence resource="EMBL-CDS" id="AAI28878"/>
    </conflict>
    <text>Extended N-terminus.</text>
</comment>
<accession>A1A600</accession>
<dbReference type="EMBL" id="BC128877">
    <property type="protein sequence ID" value="AAI28878.1"/>
    <property type="status" value="ALT_INIT"/>
    <property type="molecule type" value="mRNA"/>
</dbReference>
<dbReference type="RefSeq" id="NP_001073550.1">
    <property type="nucleotide sequence ID" value="NM_001080081.1"/>
</dbReference>
<dbReference type="SMR" id="A1A600"/>
<dbReference type="FunCoup" id="A1A600">
    <property type="interactions" value="121"/>
</dbReference>
<dbReference type="STRING" id="7955.ENSDARP00000070145"/>
<dbReference type="PaxDb" id="7955-ENSDARP00000070145"/>
<dbReference type="GeneID" id="790936"/>
<dbReference type="KEGG" id="dre:790936"/>
<dbReference type="AGR" id="ZFIN:ZDB-GENE-061215-136"/>
<dbReference type="CTD" id="283229"/>
<dbReference type="ZFIN" id="ZDB-GENE-061215-136">
    <property type="gene designation" value="cracr2b"/>
</dbReference>
<dbReference type="eggNOG" id="ENOG502QRXK">
    <property type="taxonomic scope" value="Eukaryota"/>
</dbReference>
<dbReference type="InParanoid" id="A1A600"/>
<dbReference type="OrthoDB" id="9989112at2759"/>
<dbReference type="PhylomeDB" id="A1A600"/>
<dbReference type="PRO" id="PR:A1A600"/>
<dbReference type="Proteomes" id="UP000000437">
    <property type="component" value="Chromosome 25"/>
</dbReference>
<dbReference type="GO" id="GO:0005509">
    <property type="term" value="F:calcium ion binding"/>
    <property type="evidence" value="ECO:0007669"/>
    <property type="project" value="InterPro"/>
</dbReference>
<dbReference type="CDD" id="cd00051">
    <property type="entry name" value="EFh"/>
    <property type="match status" value="1"/>
</dbReference>
<dbReference type="Gene3D" id="1.10.238.10">
    <property type="entry name" value="EF-hand"/>
    <property type="match status" value="1"/>
</dbReference>
<dbReference type="InterPro" id="IPR051111">
    <property type="entry name" value="Ca-binding_regulatory"/>
</dbReference>
<dbReference type="InterPro" id="IPR011992">
    <property type="entry name" value="EF-hand-dom_pair"/>
</dbReference>
<dbReference type="InterPro" id="IPR018247">
    <property type="entry name" value="EF_Hand_1_Ca_BS"/>
</dbReference>
<dbReference type="InterPro" id="IPR002048">
    <property type="entry name" value="EF_hand_dom"/>
</dbReference>
<dbReference type="PANTHER" id="PTHR46311:SF3">
    <property type="entry name" value="CALCIUM-BINDING PROTEIN 8"/>
    <property type="match status" value="1"/>
</dbReference>
<dbReference type="PANTHER" id="PTHR46311">
    <property type="entry name" value="CALCIUM-BINDING PROTEIN 8-RELATED"/>
    <property type="match status" value="1"/>
</dbReference>
<dbReference type="Pfam" id="PF13499">
    <property type="entry name" value="EF-hand_7"/>
    <property type="match status" value="1"/>
</dbReference>
<dbReference type="SMART" id="SM00054">
    <property type="entry name" value="EFh"/>
    <property type="match status" value="2"/>
</dbReference>
<dbReference type="SUPFAM" id="SSF47473">
    <property type="entry name" value="EF-hand"/>
    <property type="match status" value="1"/>
</dbReference>
<dbReference type="PROSITE" id="PS00018">
    <property type="entry name" value="EF_HAND_1"/>
    <property type="match status" value="1"/>
</dbReference>
<dbReference type="PROSITE" id="PS50222">
    <property type="entry name" value="EF_HAND_2"/>
    <property type="match status" value="2"/>
</dbReference>
<organism>
    <name type="scientific">Danio rerio</name>
    <name type="common">Zebrafish</name>
    <name type="synonym">Brachydanio rerio</name>
    <dbReference type="NCBI Taxonomy" id="7955"/>
    <lineage>
        <taxon>Eukaryota</taxon>
        <taxon>Metazoa</taxon>
        <taxon>Chordata</taxon>
        <taxon>Craniata</taxon>
        <taxon>Vertebrata</taxon>
        <taxon>Euteleostomi</taxon>
        <taxon>Actinopterygii</taxon>
        <taxon>Neopterygii</taxon>
        <taxon>Teleostei</taxon>
        <taxon>Ostariophysi</taxon>
        <taxon>Cypriniformes</taxon>
        <taxon>Danionidae</taxon>
        <taxon>Danioninae</taxon>
        <taxon>Danio</taxon>
    </lineage>
</organism>
<feature type="chain" id="PRO_0000395807" description="EF-hand calcium-binding domain-containing protein 4A">
    <location>
        <begin position="1"/>
        <end position="390"/>
    </location>
</feature>
<feature type="domain" description="EF-hand 1" evidence="2">
    <location>
        <begin position="33"/>
        <end position="66"/>
    </location>
</feature>
<feature type="domain" description="EF-hand 2" evidence="2">
    <location>
        <begin position="67"/>
        <end position="102"/>
    </location>
</feature>
<feature type="region of interest" description="Disordered" evidence="3">
    <location>
        <begin position="1"/>
        <end position="37"/>
    </location>
</feature>
<feature type="region of interest" description="Disordered" evidence="3">
    <location>
        <begin position="206"/>
        <end position="234"/>
    </location>
</feature>
<feature type="coiled-coil region" evidence="1">
    <location>
        <begin position="173"/>
        <end position="357"/>
    </location>
</feature>
<feature type="compositionally biased region" description="Low complexity" evidence="3">
    <location>
        <begin position="1"/>
        <end position="27"/>
    </location>
</feature>
<feature type="binding site" evidence="2">
    <location>
        <position position="80"/>
    </location>
    <ligand>
        <name>Ca(2+)</name>
        <dbReference type="ChEBI" id="CHEBI:29108"/>
    </ligand>
</feature>
<feature type="binding site" evidence="2">
    <location>
        <position position="82"/>
    </location>
    <ligand>
        <name>Ca(2+)</name>
        <dbReference type="ChEBI" id="CHEBI:29108"/>
    </ligand>
</feature>
<feature type="binding site" evidence="2">
    <location>
        <position position="84"/>
    </location>
    <ligand>
        <name>Ca(2+)</name>
        <dbReference type="ChEBI" id="CHEBI:29108"/>
    </ligand>
</feature>
<feature type="binding site" evidence="2">
    <location>
        <position position="86"/>
    </location>
    <ligand>
        <name>Ca(2+)</name>
        <dbReference type="ChEBI" id="CHEBI:29108"/>
    </ligand>
</feature>
<feature type="binding site" evidence="2">
    <location>
        <position position="91"/>
    </location>
    <ligand>
        <name>Ca(2+)</name>
        <dbReference type="ChEBI" id="CHEBI:29108"/>
    </ligand>
</feature>
<evidence type="ECO:0000255" key="1"/>
<evidence type="ECO:0000255" key="2">
    <source>
        <dbReference type="PROSITE-ProRule" id="PRU00448"/>
    </source>
</evidence>
<evidence type="ECO:0000256" key="3">
    <source>
        <dbReference type="SAM" id="MobiDB-lite"/>
    </source>
</evidence>
<evidence type="ECO:0000305" key="4"/>
<protein>
    <recommendedName>
        <fullName>EF-hand calcium-binding domain-containing protein 4A</fullName>
    </recommendedName>
    <alternativeName>
        <fullName>Calcium release-activated channel regulator 2B</fullName>
    </alternativeName>
</protein>
<keyword id="KW-0106">Calcium</keyword>
<keyword id="KW-0175">Coiled coil</keyword>
<keyword id="KW-0479">Metal-binding</keyword>
<keyword id="KW-1185">Reference proteome</keyword>
<keyword id="KW-0677">Repeat</keyword>
<gene>
    <name type="primary">cracr2b</name>
    <name type="synonym">efcab4a</name>
    <name type="ORF">zgc:158448</name>
</gene>
<proteinExistence type="evidence at transcript level"/>
<sequence length="390" mass="45747">MSPRSTLRSPLPSRTARSSASSDTPSPGADRQDRMSKAKELFVLCDKEGKGFITKRDMQRLQQELPLSPEQLESVFESLDRDRNGYLTPLEFHTGLGELVGSGPEEKVRSAGEIVGEEREEPTEIRFTQILMELGADKLFKDQWELCGLWCELQRDKPELLGVLEEVLSYTVSHLQDALKEKDNLEHALRRREEDHDRVVRSMYEDMESQLKEERERRQALDSMRQGDKKEQLLHELRTREQELEFTLTKQRELESRINSLSSDQADARGENRRLQNVNQQLQDQLEQSREELQNSLSQLQQLQNTIKLQQRGKEREVLKVSRNMQKERESLVRQLELLRDMNKRLRDDKDAHQAQKMVSQKHSFTPPTYYPACRCVHNFSPWPRSIYPY</sequence>
<name>EFC4A_DANRE</name>
<reference key="1">
    <citation type="submission" date="2006-12" db="EMBL/GenBank/DDBJ databases">
        <authorList>
            <consortium name="NIH - Zebrafish Gene Collection (ZGC) project"/>
        </authorList>
    </citation>
    <scope>NUCLEOTIDE SEQUENCE [LARGE SCALE MRNA]</scope>
    <source>
        <tissue>Embryo</tissue>
    </source>
</reference>